<feature type="chain" id="PRO_0000055644" description="Tyrosine--tRNA ligase 2">
    <location>
        <begin position="1"/>
        <end position="413"/>
    </location>
</feature>
<feature type="repeat" description="1">
    <location>
        <begin position="89"/>
        <end position="94"/>
    </location>
</feature>
<feature type="repeat" description="2">
    <location>
        <begin position="96"/>
        <end position="101"/>
    </location>
</feature>
<feature type="domain" description="S4 RNA-binding" evidence="1">
    <location>
        <begin position="353"/>
        <end position="413"/>
    </location>
</feature>
<feature type="region of interest" description="2 X 6 AA tandem repeats">
    <location>
        <begin position="89"/>
        <end position="101"/>
    </location>
</feature>
<feature type="short sequence motif" description="'HIGH' region">
    <location>
        <begin position="58"/>
        <end position="67"/>
    </location>
</feature>
<feature type="short sequence motif" description="'KMSKS' region">
    <location>
        <begin position="242"/>
        <end position="246"/>
    </location>
</feature>
<feature type="binding site" evidence="1">
    <location>
        <position position="245"/>
    </location>
    <ligand>
        <name>ATP</name>
        <dbReference type="ChEBI" id="CHEBI:30616"/>
    </ligand>
</feature>
<dbReference type="EC" id="6.1.1.1" evidence="1"/>
<dbReference type="EMBL" id="X52480">
    <property type="protein sequence ID" value="CAA36724.1"/>
    <property type="status" value="ALT_INIT"/>
    <property type="molecule type" value="Genomic_DNA"/>
</dbReference>
<dbReference type="EMBL" id="X73124">
    <property type="protein sequence ID" value="CAA51565.1"/>
    <property type="molecule type" value="Genomic_DNA"/>
</dbReference>
<dbReference type="EMBL" id="AL009126">
    <property type="protein sequence ID" value="CAB15872.1"/>
    <property type="molecule type" value="Genomic_DNA"/>
</dbReference>
<dbReference type="PIR" id="S16426">
    <property type="entry name" value="S16426"/>
</dbReference>
<dbReference type="RefSeq" id="NP_391725.1">
    <property type="nucleotide sequence ID" value="NC_000964.3"/>
</dbReference>
<dbReference type="SMR" id="P25151"/>
<dbReference type="FunCoup" id="P25151">
    <property type="interactions" value="115"/>
</dbReference>
<dbReference type="STRING" id="224308.BSU38460"/>
<dbReference type="PaxDb" id="224308-BSU38460"/>
<dbReference type="EnsemblBacteria" id="CAB15872">
    <property type="protein sequence ID" value="CAB15872"/>
    <property type="gene ID" value="BSU_38460"/>
</dbReference>
<dbReference type="GeneID" id="937345"/>
<dbReference type="KEGG" id="bsu:BSU38460"/>
<dbReference type="PATRIC" id="fig|224308.43.peg.4031"/>
<dbReference type="eggNOG" id="COG0162">
    <property type="taxonomic scope" value="Bacteria"/>
</dbReference>
<dbReference type="InParanoid" id="P25151"/>
<dbReference type="OrthoDB" id="9804243at2"/>
<dbReference type="PhylomeDB" id="P25151"/>
<dbReference type="BioCyc" id="BSUB:BSU38460-MONOMER"/>
<dbReference type="Proteomes" id="UP000001570">
    <property type="component" value="Chromosome"/>
</dbReference>
<dbReference type="GO" id="GO:0005829">
    <property type="term" value="C:cytosol"/>
    <property type="evidence" value="ECO:0000318"/>
    <property type="project" value="GO_Central"/>
</dbReference>
<dbReference type="GO" id="GO:0005524">
    <property type="term" value="F:ATP binding"/>
    <property type="evidence" value="ECO:0007669"/>
    <property type="project" value="UniProtKB-UniRule"/>
</dbReference>
<dbReference type="GO" id="GO:0003723">
    <property type="term" value="F:RNA binding"/>
    <property type="evidence" value="ECO:0007669"/>
    <property type="project" value="UniProtKB-KW"/>
</dbReference>
<dbReference type="GO" id="GO:0004831">
    <property type="term" value="F:tyrosine-tRNA ligase activity"/>
    <property type="evidence" value="ECO:0000318"/>
    <property type="project" value="GO_Central"/>
</dbReference>
<dbReference type="GO" id="GO:0043039">
    <property type="term" value="P:tRNA aminoacylation"/>
    <property type="evidence" value="ECO:0000318"/>
    <property type="project" value="GO_Central"/>
</dbReference>
<dbReference type="GO" id="GO:0006437">
    <property type="term" value="P:tyrosyl-tRNA aminoacylation"/>
    <property type="evidence" value="ECO:0007669"/>
    <property type="project" value="UniProtKB-UniRule"/>
</dbReference>
<dbReference type="CDD" id="cd00165">
    <property type="entry name" value="S4"/>
    <property type="match status" value="1"/>
</dbReference>
<dbReference type="CDD" id="cd00805">
    <property type="entry name" value="TyrRS_core"/>
    <property type="match status" value="1"/>
</dbReference>
<dbReference type="FunFam" id="1.10.240.10:FF:000006">
    <property type="entry name" value="Tyrosine--tRNA ligase"/>
    <property type="match status" value="1"/>
</dbReference>
<dbReference type="FunFam" id="3.10.290.10:FF:000022">
    <property type="entry name" value="Tyrosine--tRNA ligase"/>
    <property type="match status" value="1"/>
</dbReference>
<dbReference type="FunFam" id="3.40.50.620:FF:000061">
    <property type="entry name" value="Tyrosine--tRNA ligase"/>
    <property type="match status" value="1"/>
</dbReference>
<dbReference type="Gene3D" id="3.40.50.620">
    <property type="entry name" value="HUPs"/>
    <property type="match status" value="1"/>
</dbReference>
<dbReference type="Gene3D" id="3.10.290.10">
    <property type="entry name" value="RNA-binding S4 domain"/>
    <property type="match status" value="1"/>
</dbReference>
<dbReference type="Gene3D" id="1.10.240.10">
    <property type="entry name" value="Tyrosyl-Transfer RNA Synthetase"/>
    <property type="match status" value="1"/>
</dbReference>
<dbReference type="HAMAP" id="MF_02007">
    <property type="entry name" value="Tyr_tRNA_synth_type2"/>
    <property type="match status" value="1"/>
</dbReference>
<dbReference type="InterPro" id="IPR001412">
    <property type="entry name" value="aa-tRNA-synth_I_CS"/>
</dbReference>
<dbReference type="InterPro" id="IPR002305">
    <property type="entry name" value="aa-tRNA-synth_Ic"/>
</dbReference>
<dbReference type="InterPro" id="IPR014729">
    <property type="entry name" value="Rossmann-like_a/b/a_fold"/>
</dbReference>
<dbReference type="InterPro" id="IPR002942">
    <property type="entry name" value="S4_RNA-bd"/>
</dbReference>
<dbReference type="InterPro" id="IPR036986">
    <property type="entry name" value="S4_RNA-bd_sf"/>
</dbReference>
<dbReference type="InterPro" id="IPR054608">
    <property type="entry name" value="SYY-like_C"/>
</dbReference>
<dbReference type="InterPro" id="IPR002307">
    <property type="entry name" value="Tyr-tRNA-ligase"/>
</dbReference>
<dbReference type="InterPro" id="IPR024088">
    <property type="entry name" value="Tyr-tRNA-ligase_bac-type"/>
</dbReference>
<dbReference type="InterPro" id="IPR024108">
    <property type="entry name" value="Tyr-tRNA-ligase_bac_2"/>
</dbReference>
<dbReference type="NCBIfam" id="TIGR00234">
    <property type="entry name" value="tyrS"/>
    <property type="match status" value="1"/>
</dbReference>
<dbReference type="PANTHER" id="PTHR11766:SF1">
    <property type="entry name" value="TYROSINE--TRNA LIGASE"/>
    <property type="match status" value="1"/>
</dbReference>
<dbReference type="PANTHER" id="PTHR11766">
    <property type="entry name" value="TYROSYL-TRNA SYNTHETASE"/>
    <property type="match status" value="1"/>
</dbReference>
<dbReference type="Pfam" id="PF22421">
    <property type="entry name" value="SYY_C-terminal"/>
    <property type="match status" value="1"/>
</dbReference>
<dbReference type="Pfam" id="PF00579">
    <property type="entry name" value="tRNA-synt_1b"/>
    <property type="match status" value="1"/>
</dbReference>
<dbReference type="PRINTS" id="PR01040">
    <property type="entry name" value="TRNASYNTHTYR"/>
</dbReference>
<dbReference type="SMART" id="SM00363">
    <property type="entry name" value="S4"/>
    <property type="match status" value="1"/>
</dbReference>
<dbReference type="SUPFAM" id="SSF55174">
    <property type="entry name" value="Alpha-L RNA-binding motif"/>
    <property type="match status" value="1"/>
</dbReference>
<dbReference type="SUPFAM" id="SSF52374">
    <property type="entry name" value="Nucleotidylyl transferase"/>
    <property type="match status" value="1"/>
</dbReference>
<dbReference type="PROSITE" id="PS00178">
    <property type="entry name" value="AA_TRNA_LIGASE_I"/>
    <property type="match status" value="1"/>
</dbReference>
<dbReference type="PROSITE" id="PS50889">
    <property type="entry name" value="S4"/>
    <property type="match status" value="1"/>
</dbReference>
<evidence type="ECO:0000255" key="1">
    <source>
        <dbReference type="HAMAP-Rule" id="MF_02007"/>
    </source>
</evidence>
<evidence type="ECO:0000305" key="2"/>
<comment type="function">
    <text evidence="1">Catalyzes the attachment of tyrosine to tRNA(Tyr) in a two-step reaction: tyrosine is first activated by ATP to form Tyr-AMP and then transferred to the acceptor end of tRNA(Tyr).</text>
</comment>
<comment type="catalytic activity">
    <reaction evidence="1">
        <text>tRNA(Tyr) + L-tyrosine + ATP = L-tyrosyl-tRNA(Tyr) + AMP + diphosphate + H(+)</text>
        <dbReference type="Rhea" id="RHEA:10220"/>
        <dbReference type="Rhea" id="RHEA-COMP:9706"/>
        <dbReference type="Rhea" id="RHEA-COMP:9707"/>
        <dbReference type="ChEBI" id="CHEBI:15378"/>
        <dbReference type="ChEBI" id="CHEBI:30616"/>
        <dbReference type="ChEBI" id="CHEBI:33019"/>
        <dbReference type="ChEBI" id="CHEBI:58315"/>
        <dbReference type="ChEBI" id="CHEBI:78442"/>
        <dbReference type="ChEBI" id="CHEBI:78536"/>
        <dbReference type="ChEBI" id="CHEBI:456215"/>
        <dbReference type="EC" id="6.1.1.1"/>
    </reaction>
</comment>
<comment type="subunit">
    <text>Homodimer.</text>
</comment>
<comment type="subcellular location">
    <subcellularLocation>
        <location>Cytoplasm</location>
    </subcellularLocation>
</comment>
<comment type="similarity">
    <text evidence="1">Belongs to the class-I aminoacyl-tRNA synthetase family. TyrS type 2 subfamily.</text>
</comment>
<comment type="sequence caution" evidence="2">
    <conflict type="erroneous initiation">
        <sequence resource="EMBL-CDS" id="CAA36724"/>
    </conflict>
</comment>
<accession>P25151</accession>
<organism>
    <name type="scientific">Bacillus subtilis (strain 168)</name>
    <dbReference type="NCBI Taxonomy" id="224308"/>
    <lineage>
        <taxon>Bacteria</taxon>
        <taxon>Bacillati</taxon>
        <taxon>Bacillota</taxon>
        <taxon>Bacilli</taxon>
        <taxon>Bacillales</taxon>
        <taxon>Bacillaceae</taxon>
        <taxon>Bacillus</taxon>
    </lineage>
</organism>
<reference key="1">
    <citation type="journal article" date="1991" name="DNA Seq.">
        <title>A gene encoding a tyrosine tRNA synthetase is located near sacS in Bacillus subtilis.</title>
        <authorList>
            <person name="Glaser P."/>
            <person name="Kunst F."/>
            <person name="Debarbouille M."/>
            <person name="Vertes A."/>
            <person name="Danchin A."/>
            <person name="Dedonder R."/>
        </authorList>
    </citation>
    <scope>NUCLEOTIDE SEQUENCE [GENOMIC DNA]</scope>
    <source>
        <strain>168</strain>
    </source>
</reference>
<reference key="2">
    <citation type="journal article" date="1993" name="Mol. Microbiol.">
        <title>Bacillus subtilis genome project: cloning and sequencing of the 97 kb region from 325 degrees to 333 degrees.</title>
        <authorList>
            <person name="Glaser P."/>
            <person name="Kunst F."/>
            <person name="Arnaud M."/>
            <person name="Coudart M.P."/>
            <person name="Gonzales W."/>
            <person name="Hullo M.-F."/>
            <person name="Ionescu M."/>
            <person name="Lubochinsky B."/>
            <person name="Marcelino L."/>
            <person name="Moszer I."/>
            <person name="Presecan E."/>
            <person name="Santana M."/>
            <person name="Schneider E."/>
            <person name="Schweizer J."/>
            <person name="Vertes A."/>
            <person name="Rapoport G."/>
            <person name="Danchin A."/>
        </authorList>
    </citation>
    <scope>NUCLEOTIDE SEQUENCE [GENOMIC DNA]</scope>
    <source>
        <strain>168</strain>
    </source>
</reference>
<reference key="3">
    <citation type="journal article" date="1997" name="Nature">
        <title>The complete genome sequence of the Gram-positive bacterium Bacillus subtilis.</title>
        <authorList>
            <person name="Kunst F."/>
            <person name="Ogasawara N."/>
            <person name="Moszer I."/>
            <person name="Albertini A.M."/>
            <person name="Alloni G."/>
            <person name="Azevedo V."/>
            <person name="Bertero M.G."/>
            <person name="Bessieres P."/>
            <person name="Bolotin A."/>
            <person name="Borchert S."/>
            <person name="Borriss R."/>
            <person name="Boursier L."/>
            <person name="Brans A."/>
            <person name="Braun M."/>
            <person name="Brignell S.C."/>
            <person name="Bron S."/>
            <person name="Brouillet S."/>
            <person name="Bruschi C.V."/>
            <person name="Caldwell B."/>
            <person name="Capuano V."/>
            <person name="Carter N.M."/>
            <person name="Choi S.-K."/>
            <person name="Codani J.-J."/>
            <person name="Connerton I.F."/>
            <person name="Cummings N.J."/>
            <person name="Daniel R.A."/>
            <person name="Denizot F."/>
            <person name="Devine K.M."/>
            <person name="Duesterhoeft A."/>
            <person name="Ehrlich S.D."/>
            <person name="Emmerson P.T."/>
            <person name="Entian K.-D."/>
            <person name="Errington J."/>
            <person name="Fabret C."/>
            <person name="Ferrari E."/>
            <person name="Foulger D."/>
            <person name="Fritz C."/>
            <person name="Fujita M."/>
            <person name="Fujita Y."/>
            <person name="Fuma S."/>
            <person name="Galizzi A."/>
            <person name="Galleron N."/>
            <person name="Ghim S.-Y."/>
            <person name="Glaser P."/>
            <person name="Goffeau A."/>
            <person name="Golightly E.J."/>
            <person name="Grandi G."/>
            <person name="Guiseppi G."/>
            <person name="Guy B.J."/>
            <person name="Haga K."/>
            <person name="Haiech J."/>
            <person name="Harwood C.R."/>
            <person name="Henaut A."/>
            <person name="Hilbert H."/>
            <person name="Holsappel S."/>
            <person name="Hosono S."/>
            <person name="Hullo M.-F."/>
            <person name="Itaya M."/>
            <person name="Jones L.-M."/>
            <person name="Joris B."/>
            <person name="Karamata D."/>
            <person name="Kasahara Y."/>
            <person name="Klaerr-Blanchard M."/>
            <person name="Klein C."/>
            <person name="Kobayashi Y."/>
            <person name="Koetter P."/>
            <person name="Koningstein G."/>
            <person name="Krogh S."/>
            <person name="Kumano M."/>
            <person name="Kurita K."/>
            <person name="Lapidus A."/>
            <person name="Lardinois S."/>
            <person name="Lauber J."/>
            <person name="Lazarevic V."/>
            <person name="Lee S.-M."/>
            <person name="Levine A."/>
            <person name="Liu H."/>
            <person name="Masuda S."/>
            <person name="Mauel C."/>
            <person name="Medigue C."/>
            <person name="Medina N."/>
            <person name="Mellado R.P."/>
            <person name="Mizuno M."/>
            <person name="Moestl D."/>
            <person name="Nakai S."/>
            <person name="Noback M."/>
            <person name="Noone D."/>
            <person name="O'Reilly M."/>
            <person name="Ogawa K."/>
            <person name="Ogiwara A."/>
            <person name="Oudega B."/>
            <person name="Park S.-H."/>
            <person name="Parro V."/>
            <person name="Pohl T.M."/>
            <person name="Portetelle D."/>
            <person name="Porwollik S."/>
            <person name="Prescott A.M."/>
            <person name="Presecan E."/>
            <person name="Pujic P."/>
            <person name="Purnelle B."/>
            <person name="Rapoport G."/>
            <person name="Rey M."/>
            <person name="Reynolds S."/>
            <person name="Rieger M."/>
            <person name="Rivolta C."/>
            <person name="Rocha E."/>
            <person name="Roche B."/>
            <person name="Rose M."/>
            <person name="Sadaie Y."/>
            <person name="Sato T."/>
            <person name="Scanlan E."/>
            <person name="Schleich S."/>
            <person name="Schroeter R."/>
            <person name="Scoffone F."/>
            <person name="Sekiguchi J."/>
            <person name="Sekowska A."/>
            <person name="Seror S.J."/>
            <person name="Serror P."/>
            <person name="Shin B.-S."/>
            <person name="Soldo B."/>
            <person name="Sorokin A."/>
            <person name="Tacconi E."/>
            <person name="Takagi T."/>
            <person name="Takahashi H."/>
            <person name="Takemaru K."/>
            <person name="Takeuchi M."/>
            <person name="Tamakoshi A."/>
            <person name="Tanaka T."/>
            <person name="Terpstra P."/>
            <person name="Tognoni A."/>
            <person name="Tosato V."/>
            <person name="Uchiyama S."/>
            <person name="Vandenbol M."/>
            <person name="Vannier F."/>
            <person name="Vassarotti A."/>
            <person name="Viari A."/>
            <person name="Wambutt R."/>
            <person name="Wedler E."/>
            <person name="Wedler H."/>
            <person name="Weitzenegger T."/>
            <person name="Winters P."/>
            <person name="Wipat A."/>
            <person name="Yamamoto H."/>
            <person name="Yamane K."/>
            <person name="Yasumoto K."/>
            <person name="Yata K."/>
            <person name="Yoshida K."/>
            <person name="Yoshikawa H.-F."/>
            <person name="Zumstein E."/>
            <person name="Yoshikawa H."/>
            <person name="Danchin A."/>
        </authorList>
    </citation>
    <scope>NUCLEOTIDE SEQUENCE [LARGE SCALE GENOMIC DNA]</scope>
    <source>
        <strain>168</strain>
    </source>
</reference>
<protein>
    <recommendedName>
        <fullName evidence="1">Tyrosine--tRNA ligase 2</fullName>
        <ecNumber evidence="1">6.1.1.1</ecNumber>
    </recommendedName>
    <alternativeName>
        <fullName evidence="1">Tyrosyl-tRNA synthetase 2</fullName>
        <shortName evidence="1">TyrRS 2</shortName>
    </alternativeName>
</protein>
<name>SYY2_BACSU</name>
<proteinExistence type="inferred from homology"/>
<keyword id="KW-0030">Aminoacyl-tRNA synthetase</keyword>
<keyword id="KW-0067">ATP-binding</keyword>
<keyword id="KW-0963">Cytoplasm</keyword>
<keyword id="KW-0436">Ligase</keyword>
<keyword id="KW-0547">Nucleotide-binding</keyword>
<keyword id="KW-0648">Protein biosynthesis</keyword>
<keyword id="KW-1185">Reference proteome</keyword>
<keyword id="KW-0677">Repeat</keyword>
<keyword id="KW-0694">RNA-binding</keyword>
<sequence>MMRTFEQLTASQQKEVERQLQLYMTGAHEVIPPEELKAKLVKSISTGTPLKIKLGLDPSAPDVHLGHTVVLNKLRQFQENGHIVQLLIGDFTGKIGDPTGKSAARKQLTDEEVQHNAKTYFEQFGKVLDPEKVELHYNSKWLKTLNLEDVIELAGKITVARLMERDDFEERIAMQKPISLHEFFYPLMQGYDSVVLESDIELGGTDQHFNVLMGRHFQERYNKEKQVVILMPLLEGLDGVEKMSKSKHNYIGINEHPNDMYGKTMSLPDSLMKKYIHLATDLELEEKKQLVKDLETGAVHPRDAKMLLARTIVRMYHGEKAAEAAEHSFKTVFQENSLPEDIPAVNWKGEKTIAMIDLLVKLKLLSSKSEARRMIQNGGVRIDGEKVTDVHAKAEIRENMIIQVGKRKFLKLQ</sequence>
<gene>
    <name evidence="1" type="primary">tyrS2</name>
    <name type="synonym">tyrR</name>
    <name type="synonym">tyrS1</name>
    <name type="synonym">tyrT</name>
    <name type="synonym">tyrZ</name>
    <name type="ordered locus">BSU38460</name>
    <name type="ORF">ipa-9r</name>
</gene>